<name>PAI1_PIG</name>
<protein>
    <recommendedName>
        <fullName>Plasminogen activator inhibitor 1</fullName>
        <shortName>PAI</shortName>
        <shortName>PAI-1</shortName>
    </recommendedName>
    <alternativeName>
        <fullName>Endothelial plasminogen activator inhibitor</fullName>
    </alternativeName>
    <alternativeName>
        <fullName>Serpin E1</fullName>
    </alternativeName>
</protein>
<reference key="1">
    <citation type="journal article" date="1997" name="Thromb. Haemost.">
        <title>Expression and characterization of recombinant porcine plasminogen activator inhibitor-1.</title>
        <authorList>
            <person name="Bijnens A.P."/>
            <person name="Knockaert I."/>
            <person name="Cousin E."/>
            <person name="Kruithof E.K.O."/>
            <person name="Declerck P.J."/>
        </authorList>
    </citation>
    <scope>NUCLEOTIDE SEQUENCE [MRNA]</scope>
</reference>
<reference key="2">
    <citation type="journal article" date="1997" name="Thromb. Haemost.">
        <authorList>
            <person name="Bijnens A.P."/>
            <person name="Knockaert I."/>
            <person name="Cousin E."/>
            <person name="Kruithof E.K.O."/>
            <person name="Declerck P.J."/>
        </authorList>
    </citation>
    <scope>ERRATUM OF PUBMED:9157595</scope>
</reference>
<keyword id="KW-0325">Glycoprotein</keyword>
<keyword id="KW-0646">Protease inhibitor</keyword>
<keyword id="KW-1185">Reference proteome</keyword>
<keyword id="KW-0964">Secreted</keyword>
<keyword id="KW-0722">Serine protease inhibitor</keyword>
<keyword id="KW-0732">Signal</keyword>
<accession>P79335</accession>
<comment type="function">
    <text evidence="2 3">Serine protease inhibitor. Inhibits TMPRSS7. Is a primary inhibitor of tissue-type plasminogen activator (PLAT) and urokinase-type plasminogen activator (PLAU). As PLAT inhibitor, it is required for fibrinolysis down-regulation and is responsible for the controlled degradation of blood clots. As PLAU inhibitor, it is involved in the regulation of cell adhesion and spreading. Acts as a regulator of cell migration, independently of its role as protease inhibitor. It is required for stimulation of keratinocyte migration during cutaneous injury repair. It is involved in cellular and replicative senescence (By similarity). Plays a role in alveolar type 2 cells senescence in the lung (By similarity). Is involved in the regulation of cementogenic differentiation of periodontal ligament stem cells, and regulates odontoblast differentiation and dentin formation during odontogenesis (By similarity).</text>
</comment>
<comment type="subunit">
    <text evidence="2">Forms a heterodimer with TMPRSS7. Interacts with VTN. Binds LRP1B; binding is followed by internalization and degradation. Interacts with PPP1CB. In complex with PLAU/uPA, interacts with PLAUR/uPAR (By similarity). Interacts with SORL1 and LRP1, either alone or in complex with PLAU; these interactions are abolished in the presence of LRPAP1/RAP (By similarity). The ternary complex composed of PLAUR-PLAU-PAI1 also interacts with SORL1 (By similarity). Interacts with PLAT/tPA (By similarity). Also interacts with SORL1, when complexed to PLAT/tPA (By similarity).</text>
</comment>
<comment type="subcellular location">
    <subcellularLocation>
        <location evidence="2">Secreted</location>
    </subcellularLocation>
</comment>
<comment type="similarity">
    <text evidence="5">Belongs to the serpin family.</text>
</comment>
<organism>
    <name type="scientific">Sus scrofa</name>
    <name type="common">Pig</name>
    <dbReference type="NCBI Taxonomy" id="9823"/>
    <lineage>
        <taxon>Eukaryota</taxon>
        <taxon>Metazoa</taxon>
        <taxon>Chordata</taxon>
        <taxon>Craniata</taxon>
        <taxon>Vertebrata</taxon>
        <taxon>Euteleostomi</taxon>
        <taxon>Mammalia</taxon>
        <taxon>Eutheria</taxon>
        <taxon>Laurasiatheria</taxon>
        <taxon>Artiodactyla</taxon>
        <taxon>Suina</taxon>
        <taxon>Suidae</taxon>
        <taxon>Sus</taxon>
    </lineage>
</organism>
<evidence type="ECO:0000250" key="1"/>
<evidence type="ECO:0000250" key="2">
    <source>
        <dbReference type="UniProtKB" id="P05121"/>
    </source>
</evidence>
<evidence type="ECO:0000250" key="3">
    <source>
        <dbReference type="UniProtKB" id="P22777"/>
    </source>
</evidence>
<evidence type="ECO:0000255" key="4"/>
<evidence type="ECO:0000305" key="5"/>
<proteinExistence type="evidence at transcript level"/>
<dbReference type="EMBL" id="Y11347">
    <property type="protein sequence ID" value="CAA72182.1"/>
    <property type="molecule type" value="mRNA"/>
</dbReference>
<dbReference type="RefSeq" id="NP_999075.1">
    <property type="nucleotide sequence ID" value="NM_213910.1"/>
</dbReference>
<dbReference type="SMR" id="P79335"/>
<dbReference type="FunCoup" id="P79335">
    <property type="interactions" value="145"/>
</dbReference>
<dbReference type="STRING" id="9823.ENSSSCP00000026436"/>
<dbReference type="MEROPS" id="I04.020"/>
<dbReference type="GlyCosmos" id="P79335">
    <property type="glycosylation" value="3 sites, No reported glycans"/>
</dbReference>
<dbReference type="GlyGen" id="P79335">
    <property type="glycosylation" value="3 sites"/>
</dbReference>
<dbReference type="PaxDb" id="9823-ENSSSCP00000026436"/>
<dbReference type="PeptideAtlas" id="P79335"/>
<dbReference type="Ensembl" id="ENSSSCT00065108289.1">
    <property type="protein sequence ID" value="ENSSSCP00065048379.1"/>
    <property type="gene ID" value="ENSSSCG00065078203.1"/>
</dbReference>
<dbReference type="GeneID" id="396945"/>
<dbReference type="KEGG" id="ssc:396945"/>
<dbReference type="CTD" id="5054"/>
<dbReference type="eggNOG" id="KOG2392">
    <property type="taxonomic scope" value="Eukaryota"/>
</dbReference>
<dbReference type="InParanoid" id="P79335"/>
<dbReference type="OrthoDB" id="8179360at2759"/>
<dbReference type="Reactome" id="R-SSC-114608">
    <property type="pathway name" value="Platelet degranulation"/>
</dbReference>
<dbReference type="Reactome" id="R-SSC-3000178">
    <property type="pathway name" value="ECM proteoglycans"/>
</dbReference>
<dbReference type="Reactome" id="R-SSC-75205">
    <property type="pathway name" value="Dissolution of Fibrin Clot"/>
</dbReference>
<dbReference type="Proteomes" id="UP000008227">
    <property type="component" value="Unplaced"/>
</dbReference>
<dbReference type="Proteomes" id="UP000314985">
    <property type="component" value="Unplaced"/>
</dbReference>
<dbReference type="Proteomes" id="UP000694570">
    <property type="component" value="Unplaced"/>
</dbReference>
<dbReference type="Proteomes" id="UP000694571">
    <property type="component" value="Unplaced"/>
</dbReference>
<dbReference type="Proteomes" id="UP000694720">
    <property type="component" value="Unplaced"/>
</dbReference>
<dbReference type="Proteomes" id="UP000694722">
    <property type="component" value="Unplaced"/>
</dbReference>
<dbReference type="Proteomes" id="UP000694723">
    <property type="component" value="Unplaced"/>
</dbReference>
<dbReference type="Proteomes" id="UP000694724">
    <property type="component" value="Unplaced"/>
</dbReference>
<dbReference type="Proteomes" id="UP000694725">
    <property type="component" value="Unplaced"/>
</dbReference>
<dbReference type="Proteomes" id="UP000694726">
    <property type="component" value="Unplaced"/>
</dbReference>
<dbReference type="Proteomes" id="UP000694727">
    <property type="component" value="Unplaced"/>
</dbReference>
<dbReference type="Proteomes" id="UP000694728">
    <property type="component" value="Unplaced"/>
</dbReference>
<dbReference type="GO" id="GO:0005615">
    <property type="term" value="C:extracellular space"/>
    <property type="evidence" value="ECO:0000318"/>
    <property type="project" value="GO_Central"/>
</dbReference>
<dbReference type="GO" id="GO:0004867">
    <property type="term" value="F:serine-type endopeptidase inhibitor activity"/>
    <property type="evidence" value="ECO:0000318"/>
    <property type="project" value="GO_Central"/>
</dbReference>
<dbReference type="GO" id="GO:0010757">
    <property type="term" value="P:negative regulation of plasminogen activation"/>
    <property type="evidence" value="ECO:0000318"/>
    <property type="project" value="GO_Central"/>
</dbReference>
<dbReference type="GO" id="GO:0061044">
    <property type="term" value="P:negative regulation of vascular wound healing"/>
    <property type="evidence" value="ECO:0000318"/>
    <property type="project" value="GO_Central"/>
</dbReference>
<dbReference type="GO" id="GO:0050820">
    <property type="term" value="P:positive regulation of coagulation"/>
    <property type="evidence" value="ECO:0000318"/>
    <property type="project" value="GO_Central"/>
</dbReference>
<dbReference type="GO" id="GO:0090399">
    <property type="term" value="P:replicative senescence"/>
    <property type="evidence" value="ECO:0000250"/>
    <property type="project" value="UniProtKB"/>
</dbReference>
<dbReference type="CDD" id="cd02051">
    <property type="entry name" value="serpinE1_PAI-1"/>
    <property type="match status" value="1"/>
</dbReference>
<dbReference type="FunFam" id="2.30.39.10:FF:000006">
    <property type="entry name" value="Plasminogen activator inhibitor 1"/>
    <property type="match status" value="1"/>
</dbReference>
<dbReference type="FunFam" id="3.30.497.10:FF:000006">
    <property type="entry name" value="Plasminogen activator inhibitor 1"/>
    <property type="match status" value="1"/>
</dbReference>
<dbReference type="Gene3D" id="2.30.39.10">
    <property type="entry name" value="Alpha-1-antitrypsin, domain 1"/>
    <property type="match status" value="1"/>
</dbReference>
<dbReference type="Gene3D" id="3.30.497.10">
    <property type="entry name" value="Antithrombin, subunit I, domain 2"/>
    <property type="match status" value="1"/>
</dbReference>
<dbReference type="InterPro" id="IPR023795">
    <property type="entry name" value="Serpin_CS"/>
</dbReference>
<dbReference type="InterPro" id="IPR023796">
    <property type="entry name" value="Serpin_dom"/>
</dbReference>
<dbReference type="InterPro" id="IPR000215">
    <property type="entry name" value="Serpin_fam"/>
</dbReference>
<dbReference type="InterPro" id="IPR036186">
    <property type="entry name" value="Serpin_sf"/>
</dbReference>
<dbReference type="InterPro" id="IPR042178">
    <property type="entry name" value="Serpin_sf_1"/>
</dbReference>
<dbReference type="InterPro" id="IPR042185">
    <property type="entry name" value="Serpin_sf_2"/>
</dbReference>
<dbReference type="PANTHER" id="PTHR11461:SF49">
    <property type="entry name" value="PLASMINOGEN ACTIVATOR INHIBITOR 1"/>
    <property type="match status" value="1"/>
</dbReference>
<dbReference type="PANTHER" id="PTHR11461">
    <property type="entry name" value="SERINE PROTEASE INHIBITOR, SERPIN"/>
    <property type="match status" value="1"/>
</dbReference>
<dbReference type="Pfam" id="PF00079">
    <property type="entry name" value="Serpin"/>
    <property type="match status" value="1"/>
</dbReference>
<dbReference type="SMART" id="SM00093">
    <property type="entry name" value="SERPIN"/>
    <property type="match status" value="1"/>
</dbReference>
<dbReference type="SUPFAM" id="SSF56574">
    <property type="entry name" value="Serpins"/>
    <property type="match status" value="1"/>
</dbReference>
<dbReference type="PROSITE" id="PS00284">
    <property type="entry name" value="SERPIN"/>
    <property type="match status" value="1"/>
</dbReference>
<gene>
    <name type="primary">SERPINE1</name>
    <name type="synonym">PAI1</name>
    <name type="synonym">PLANH1</name>
</gene>
<sequence length="402" mass="45450">MRMSLVFACLAMGLALTFAEGSASSHHQSLAARLATDFGVKVFRQVVQASKDRNVVFSPYGVASVLAMLQLTTAGDTQQQIQEAMQFKIEEKGMAPALRQLYKELMGPWNKDEISTADAIFVQRDLKLVQGFMPYFFRLFRTTVKQVDFSEMDRARFIINDWVKRHTKGMINDLLGQGAVDQLTRLVLVNALYFNGQWKTPFPEKSTHHRLFHKSDGSTVSVPMMAQTNKFNYTEFSTPDGHYYDILELPYHGNTLSMFIAAPYEKEVPLSALTSILDAQLISQWKGNMTRLTRLLVLPKFSLESEVDLRRPLENLGMTDMFRPNQADFSSLSDQELLYMSQALQKVKIEVNESGTVASSSTAIIVSARMAPEEIIMDRPFLFVVRHNPTGTVLFMGQVMEP</sequence>
<feature type="signal peptide" evidence="1">
    <location>
        <begin position="1"/>
        <end position="23"/>
    </location>
</feature>
<feature type="chain" id="PRO_0000032502" description="Plasminogen activator inhibitor 1">
    <location>
        <begin position="24"/>
        <end position="402"/>
    </location>
</feature>
<feature type="site" description="Reactive bond">
    <location>
        <begin position="369"/>
        <end position="370"/>
    </location>
</feature>
<feature type="glycosylation site" description="N-linked (GlcNAc...) asparagine" evidence="4">
    <location>
        <position position="232"/>
    </location>
</feature>
<feature type="glycosylation site" description="N-linked (GlcNAc...) asparagine" evidence="4">
    <location>
        <position position="288"/>
    </location>
</feature>
<feature type="glycosylation site" description="N-linked (GlcNAc...) asparagine" evidence="4">
    <location>
        <position position="352"/>
    </location>
</feature>